<name>ICAA_STAAS</name>
<keyword id="KW-1003">Cell membrane</keyword>
<keyword id="KW-0328">Glycosyltransferase</keyword>
<keyword id="KW-0472">Membrane</keyword>
<keyword id="KW-0808">Transferase</keyword>
<keyword id="KW-0812">Transmembrane</keyword>
<keyword id="KW-1133">Transmembrane helix</keyword>
<reference key="1">
    <citation type="journal article" date="2004" name="Proc. Natl. Acad. Sci. U.S.A.">
        <title>Complete genomes of two clinical Staphylococcus aureus strains: evidence for the rapid evolution of virulence and drug resistance.</title>
        <authorList>
            <person name="Holden M.T.G."/>
            <person name="Feil E.J."/>
            <person name="Lindsay J.A."/>
            <person name="Peacock S.J."/>
            <person name="Day N.P.J."/>
            <person name="Enright M.C."/>
            <person name="Foster T.J."/>
            <person name="Moore C.E."/>
            <person name="Hurst L."/>
            <person name="Atkin R."/>
            <person name="Barron A."/>
            <person name="Bason N."/>
            <person name="Bentley S.D."/>
            <person name="Chillingworth C."/>
            <person name="Chillingworth T."/>
            <person name="Churcher C."/>
            <person name="Clark L."/>
            <person name="Corton C."/>
            <person name="Cronin A."/>
            <person name="Doggett J."/>
            <person name="Dowd L."/>
            <person name="Feltwell T."/>
            <person name="Hance Z."/>
            <person name="Harris B."/>
            <person name="Hauser H."/>
            <person name="Holroyd S."/>
            <person name="Jagels K."/>
            <person name="James K.D."/>
            <person name="Lennard N."/>
            <person name="Line A."/>
            <person name="Mayes R."/>
            <person name="Moule S."/>
            <person name="Mungall K."/>
            <person name="Ormond D."/>
            <person name="Quail M.A."/>
            <person name="Rabbinowitsch E."/>
            <person name="Rutherford K.M."/>
            <person name="Sanders M."/>
            <person name="Sharp S."/>
            <person name="Simmonds M."/>
            <person name="Stevens K."/>
            <person name="Whitehead S."/>
            <person name="Barrell B.G."/>
            <person name="Spratt B.G."/>
            <person name="Parkhill J."/>
        </authorList>
    </citation>
    <scope>NUCLEOTIDE SEQUENCE [LARGE SCALE GENOMIC DNA]</scope>
    <source>
        <strain>MSSA476</strain>
    </source>
</reference>
<protein>
    <recommendedName>
        <fullName>Poly-beta-1,6-N-acetyl-D-glucosamine synthase</fullName>
        <shortName>PNAG synthase</shortName>
        <shortName>Poly-beta-1,6-GlcNAc synthase</shortName>
        <ecNumber>2.4.1.-</ecNumber>
    </recommendedName>
    <alternativeName>
        <fullName>Biofilm polysaccharide intercellular adhesin synthesis protein IcaA</fullName>
        <shortName>Biofilm PIA synthesis protein IcaA</shortName>
    </alternativeName>
    <alternativeName>
        <fullName>Intercellular adhesion protein A</fullName>
    </alternativeName>
    <alternativeName>
        <fullName>N-acetylglucosaminyltransferase IcaA</fullName>
    </alternativeName>
</protein>
<comment type="function">
    <text evidence="1">N-acetylglucosaminyltransferase that catalyzes the polymerization of single monomer units of UDP-N-acetylglucosamine to produce the linear homomer poly-beta-1,6-N-acetyl-D-glucosamine (PNAG, also referred to as PIA), a biofilm adhesin polysaccharide. Requires IcaD for full activity (By similarity).</text>
</comment>
<comment type="subcellular location">
    <subcellularLocation>
        <location evidence="1">Cell membrane</location>
        <topology evidence="1">Multi-pass membrane protein</topology>
    </subcellularLocation>
</comment>
<comment type="similarity">
    <text evidence="3">Belongs to the glycosyltransferase 2 family.</text>
</comment>
<dbReference type="EC" id="2.4.1.-"/>
<dbReference type="EMBL" id="BX571857">
    <property type="protein sequence ID" value="CAG44369.1"/>
    <property type="molecule type" value="Genomic_DNA"/>
</dbReference>
<dbReference type="RefSeq" id="WP_001159427.1">
    <property type="nucleotide sequence ID" value="NC_002953.3"/>
</dbReference>
<dbReference type="SMR" id="Q6G608"/>
<dbReference type="CAZy" id="GT2">
    <property type="family name" value="Glycosyltransferase Family 2"/>
</dbReference>
<dbReference type="KEGG" id="sas:SAS2552"/>
<dbReference type="HOGENOM" id="CLU_023978_0_1_9"/>
<dbReference type="GO" id="GO:0005886">
    <property type="term" value="C:plasma membrane"/>
    <property type="evidence" value="ECO:0007669"/>
    <property type="project" value="UniProtKB-SubCell"/>
</dbReference>
<dbReference type="GO" id="GO:0008375">
    <property type="term" value="F:acetylglucosaminyltransferase activity"/>
    <property type="evidence" value="ECO:0007669"/>
    <property type="project" value="InterPro"/>
</dbReference>
<dbReference type="GO" id="GO:0043708">
    <property type="term" value="P:cell adhesion involved in biofilm formation"/>
    <property type="evidence" value="ECO:0007669"/>
    <property type="project" value="InterPro"/>
</dbReference>
<dbReference type="CDD" id="cd06423">
    <property type="entry name" value="CESA_like"/>
    <property type="match status" value="1"/>
</dbReference>
<dbReference type="Gene3D" id="3.90.550.10">
    <property type="entry name" value="Spore Coat Polysaccharide Biosynthesis Protein SpsA, Chain A"/>
    <property type="match status" value="1"/>
</dbReference>
<dbReference type="InterPro" id="IPR001173">
    <property type="entry name" value="Glyco_trans_2-like"/>
</dbReference>
<dbReference type="InterPro" id="IPR029044">
    <property type="entry name" value="Nucleotide-diphossugar_trans"/>
</dbReference>
<dbReference type="InterPro" id="IPR023853">
    <property type="entry name" value="PGA_PgaC/IcaA"/>
</dbReference>
<dbReference type="NCBIfam" id="TIGR03937">
    <property type="entry name" value="PgaC_IcaA"/>
    <property type="match status" value="1"/>
</dbReference>
<dbReference type="PANTHER" id="PTHR43630">
    <property type="entry name" value="POLY-BETA-1,6-N-ACETYL-D-GLUCOSAMINE SYNTHASE"/>
    <property type="match status" value="1"/>
</dbReference>
<dbReference type="PANTHER" id="PTHR43630:SF1">
    <property type="entry name" value="POLY-BETA-1,6-N-ACETYL-D-GLUCOSAMINE SYNTHASE"/>
    <property type="match status" value="1"/>
</dbReference>
<dbReference type="Pfam" id="PF00535">
    <property type="entry name" value="Glycos_transf_2"/>
    <property type="match status" value="1"/>
</dbReference>
<dbReference type="SUPFAM" id="SSF53448">
    <property type="entry name" value="Nucleotide-diphospho-sugar transferases"/>
    <property type="match status" value="1"/>
</dbReference>
<evidence type="ECO:0000250" key="1"/>
<evidence type="ECO:0000255" key="2"/>
<evidence type="ECO:0000305" key="3"/>
<organism>
    <name type="scientific">Staphylococcus aureus (strain MSSA476)</name>
    <dbReference type="NCBI Taxonomy" id="282459"/>
    <lineage>
        <taxon>Bacteria</taxon>
        <taxon>Bacillati</taxon>
        <taxon>Bacillota</taxon>
        <taxon>Bacilli</taxon>
        <taxon>Bacillales</taxon>
        <taxon>Staphylococcaceae</taxon>
        <taxon>Staphylococcus</taxon>
    </lineage>
</organism>
<proteinExistence type="inferred from homology"/>
<sequence>MQFFNFLLFYPVFMSIYWIVGSIYFYFTREIRYSLNKKPDINVDELEGITFLLACYNESDTIEDTLSNVLALKYEKKEIIIINDGSSDNTAELIYKIKENNDFIFVDLQENRGKANALNQGIKQASYDYVMCLDADTIVDQDAPYYMIENFKHDPKLGAVTGNPRIRNKSSILGKIQTIEYASLIGCIKRSQTLAGAVNTISGVFTLFKKSAVVDVGYWDTDMITEDIAVSWKLHLRGYRIKYEPLAMCWMLVPETLGGLWKQRVRWAQGGHEVLLRDFFSTMKTKRFPLYILMFEQIISILWVYIVLLYLGYLFITANFLDYTFMTYSFSIFLLSSFTMTFINVIQFTVALFIDSRYEKKNMAGLIFVSWYPTVYWIINAAVVLVAFPKALKRKKGGYATWSSPDRGNTQR</sequence>
<accession>Q6G608</accession>
<gene>
    <name type="primary">icaA</name>
    <name type="ordered locus">SAS2552</name>
</gene>
<feature type="chain" id="PRO_0000059280" description="Poly-beta-1,6-N-acetyl-D-glucosamine synthase">
    <location>
        <begin position="1"/>
        <end position="412"/>
    </location>
</feature>
<feature type="transmembrane region" description="Helical" evidence="2">
    <location>
        <begin position="6"/>
        <end position="28"/>
    </location>
</feature>
<feature type="transmembrane region" description="Helical" evidence="2">
    <location>
        <begin position="290"/>
        <end position="312"/>
    </location>
</feature>
<feature type="transmembrane region" description="Helical" evidence="2">
    <location>
        <begin position="332"/>
        <end position="354"/>
    </location>
</feature>
<feature type="transmembrane region" description="Helical" evidence="2">
    <location>
        <begin position="366"/>
        <end position="388"/>
    </location>
</feature>